<name>FLUC_NITV2</name>
<sequence>MHRFVLVATGGIFGSLARYVLSGVAQKLTTSSFPYGTVLVNLLGSLLFGLVWGILENRITFAPEARLLLLTGFMGSLTTFSTLTYEGMVLLQSHMWLQAALYIVGQTVAGIMLVWFGAGLGRLV</sequence>
<gene>
    <name evidence="1" type="primary">fluC</name>
    <name evidence="1" type="synonym">crcB</name>
    <name type="ordered locus">DVU_1599</name>
</gene>
<organism>
    <name type="scientific">Nitratidesulfovibrio vulgaris (strain ATCC 29579 / DSM 644 / CCUG 34227 / NCIMB 8303 / VKM B-1760 / Hildenborough)</name>
    <name type="common">Desulfovibrio vulgaris</name>
    <dbReference type="NCBI Taxonomy" id="882"/>
    <lineage>
        <taxon>Bacteria</taxon>
        <taxon>Pseudomonadati</taxon>
        <taxon>Thermodesulfobacteriota</taxon>
        <taxon>Desulfovibrionia</taxon>
        <taxon>Desulfovibrionales</taxon>
        <taxon>Desulfovibrionaceae</taxon>
        <taxon>Nitratidesulfovibrio</taxon>
    </lineage>
</organism>
<reference key="1">
    <citation type="journal article" date="2004" name="Nat. Biotechnol.">
        <title>The genome sequence of the anaerobic, sulfate-reducing bacterium Desulfovibrio vulgaris Hildenborough.</title>
        <authorList>
            <person name="Heidelberg J.F."/>
            <person name="Seshadri R."/>
            <person name="Haveman S.A."/>
            <person name="Hemme C.L."/>
            <person name="Paulsen I.T."/>
            <person name="Kolonay J.F."/>
            <person name="Eisen J.A."/>
            <person name="Ward N.L."/>
            <person name="Methe B.A."/>
            <person name="Brinkac L.M."/>
            <person name="Daugherty S.C."/>
            <person name="DeBoy R.T."/>
            <person name="Dodson R.J."/>
            <person name="Durkin A.S."/>
            <person name="Madupu R."/>
            <person name="Nelson W.C."/>
            <person name="Sullivan S.A."/>
            <person name="Fouts D.E."/>
            <person name="Haft D.H."/>
            <person name="Selengut J."/>
            <person name="Peterson J.D."/>
            <person name="Davidsen T.M."/>
            <person name="Zafar N."/>
            <person name="Zhou L."/>
            <person name="Radune D."/>
            <person name="Dimitrov G."/>
            <person name="Hance M."/>
            <person name="Tran K."/>
            <person name="Khouri H.M."/>
            <person name="Gill J."/>
            <person name="Utterback T.R."/>
            <person name="Feldblyum T.V."/>
            <person name="Wall J.D."/>
            <person name="Voordouw G."/>
            <person name="Fraser C.M."/>
        </authorList>
    </citation>
    <scope>NUCLEOTIDE SEQUENCE [LARGE SCALE GENOMIC DNA]</scope>
    <source>
        <strain>ATCC 29579 / DSM 644 / CCUG 34227 / NCIMB 8303 / VKM B-1760 / Hildenborough</strain>
    </source>
</reference>
<proteinExistence type="inferred from homology"/>
<protein>
    <recommendedName>
        <fullName evidence="1">Fluoride-specific ion channel FluC</fullName>
    </recommendedName>
</protein>
<evidence type="ECO:0000255" key="1">
    <source>
        <dbReference type="HAMAP-Rule" id="MF_00454"/>
    </source>
</evidence>
<comment type="function">
    <text evidence="1">Fluoride-specific ion channel. Important for reducing fluoride concentration in the cell, thus reducing its toxicity.</text>
</comment>
<comment type="catalytic activity">
    <reaction evidence="1">
        <text>fluoride(in) = fluoride(out)</text>
        <dbReference type="Rhea" id="RHEA:76159"/>
        <dbReference type="ChEBI" id="CHEBI:17051"/>
    </reaction>
    <physiologicalReaction direction="left-to-right" evidence="1">
        <dbReference type="Rhea" id="RHEA:76160"/>
    </physiologicalReaction>
</comment>
<comment type="activity regulation">
    <text evidence="1">Na(+) is not transported, but it plays an essential structural role and its presence is essential for fluoride channel function.</text>
</comment>
<comment type="subcellular location">
    <subcellularLocation>
        <location evidence="1">Cell inner membrane</location>
        <topology evidence="1">Multi-pass membrane protein</topology>
    </subcellularLocation>
</comment>
<comment type="similarity">
    <text evidence="1">Belongs to the fluoride channel Fluc/FEX (TC 1.A.43) family.</text>
</comment>
<keyword id="KW-0997">Cell inner membrane</keyword>
<keyword id="KW-1003">Cell membrane</keyword>
<keyword id="KW-0407">Ion channel</keyword>
<keyword id="KW-0406">Ion transport</keyword>
<keyword id="KW-0472">Membrane</keyword>
<keyword id="KW-0479">Metal-binding</keyword>
<keyword id="KW-1185">Reference proteome</keyword>
<keyword id="KW-0915">Sodium</keyword>
<keyword id="KW-0812">Transmembrane</keyword>
<keyword id="KW-1133">Transmembrane helix</keyword>
<keyword id="KW-0813">Transport</keyword>
<accession>Q72BN6</accession>
<dbReference type="EMBL" id="AE017285">
    <property type="protein sequence ID" value="AAS96077.1"/>
    <property type="molecule type" value="Genomic_DNA"/>
</dbReference>
<dbReference type="RefSeq" id="WP_010938890.1">
    <property type="nucleotide sequence ID" value="NC_002937.3"/>
</dbReference>
<dbReference type="RefSeq" id="YP_010818.1">
    <property type="nucleotide sequence ID" value="NC_002937.3"/>
</dbReference>
<dbReference type="SMR" id="Q72BN6"/>
<dbReference type="STRING" id="882.DVU_1599"/>
<dbReference type="PaxDb" id="882-DVU_1599"/>
<dbReference type="EnsemblBacteria" id="AAS96077">
    <property type="protein sequence ID" value="AAS96077"/>
    <property type="gene ID" value="DVU_1599"/>
</dbReference>
<dbReference type="KEGG" id="dvu:DVU_1599"/>
<dbReference type="PATRIC" id="fig|882.5.peg.1474"/>
<dbReference type="eggNOG" id="COG0239">
    <property type="taxonomic scope" value="Bacteria"/>
</dbReference>
<dbReference type="HOGENOM" id="CLU_114342_2_3_7"/>
<dbReference type="OrthoDB" id="9806299at2"/>
<dbReference type="PhylomeDB" id="Q72BN6"/>
<dbReference type="Proteomes" id="UP000002194">
    <property type="component" value="Chromosome"/>
</dbReference>
<dbReference type="GO" id="GO:0005886">
    <property type="term" value="C:plasma membrane"/>
    <property type="evidence" value="ECO:0007669"/>
    <property type="project" value="UniProtKB-SubCell"/>
</dbReference>
<dbReference type="GO" id="GO:0062054">
    <property type="term" value="F:fluoride channel activity"/>
    <property type="evidence" value="ECO:0007669"/>
    <property type="project" value="UniProtKB-UniRule"/>
</dbReference>
<dbReference type="GO" id="GO:0046872">
    <property type="term" value="F:metal ion binding"/>
    <property type="evidence" value="ECO:0007669"/>
    <property type="project" value="UniProtKB-KW"/>
</dbReference>
<dbReference type="GO" id="GO:0140114">
    <property type="term" value="P:cellular detoxification of fluoride"/>
    <property type="evidence" value="ECO:0007669"/>
    <property type="project" value="UniProtKB-UniRule"/>
</dbReference>
<dbReference type="HAMAP" id="MF_00454">
    <property type="entry name" value="FluC"/>
    <property type="match status" value="1"/>
</dbReference>
<dbReference type="InterPro" id="IPR003691">
    <property type="entry name" value="FluC"/>
</dbReference>
<dbReference type="NCBIfam" id="TIGR00494">
    <property type="entry name" value="crcB"/>
    <property type="match status" value="1"/>
</dbReference>
<dbReference type="PANTHER" id="PTHR28259">
    <property type="entry name" value="FLUORIDE EXPORT PROTEIN 1-RELATED"/>
    <property type="match status" value="1"/>
</dbReference>
<dbReference type="PANTHER" id="PTHR28259:SF1">
    <property type="entry name" value="FLUORIDE EXPORT PROTEIN 1-RELATED"/>
    <property type="match status" value="1"/>
</dbReference>
<dbReference type="Pfam" id="PF02537">
    <property type="entry name" value="CRCB"/>
    <property type="match status" value="1"/>
</dbReference>
<feature type="chain" id="PRO_0000110096" description="Fluoride-specific ion channel FluC">
    <location>
        <begin position="1"/>
        <end position="124"/>
    </location>
</feature>
<feature type="transmembrane region" description="Helical" evidence="1">
    <location>
        <begin position="4"/>
        <end position="24"/>
    </location>
</feature>
<feature type="transmembrane region" description="Helical" evidence="1">
    <location>
        <begin position="35"/>
        <end position="55"/>
    </location>
</feature>
<feature type="transmembrane region" description="Helical" evidence="1">
    <location>
        <begin position="67"/>
        <end position="87"/>
    </location>
</feature>
<feature type="transmembrane region" description="Helical" evidence="1">
    <location>
        <begin position="100"/>
        <end position="120"/>
    </location>
</feature>
<feature type="binding site" evidence="1">
    <location>
        <position position="75"/>
    </location>
    <ligand>
        <name>Na(+)</name>
        <dbReference type="ChEBI" id="CHEBI:29101"/>
        <note>structural</note>
    </ligand>
</feature>
<feature type="binding site" evidence="1">
    <location>
        <position position="78"/>
    </location>
    <ligand>
        <name>Na(+)</name>
        <dbReference type="ChEBI" id="CHEBI:29101"/>
        <note>structural</note>
    </ligand>
</feature>